<proteinExistence type="evidence at transcript level"/>
<dbReference type="EMBL" id="AF153127">
    <property type="protein sequence ID" value="AAD34166.1"/>
    <property type="molecule type" value="mRNA"/>
</dbReference>
<dbReference type="RefSeq" id="NP_990157.1">
    <property type="nucleotide sequence ID" value="NM_204826.2"/>
</dbReference>
<dbReference type="RefSeq" id="XP_015134805.1">
    <property type="nucleotide sequence ID" value="XM_015279319.4"/>
</dbReference>
<dbReference type="RefSeq" id="XP_040504879.1">
    <property type="nucleotide sequence ID" value="XM_040648945.2"/>
</dbReference>
<dbReference type="RefSeq" id="XP_046784676.1">
    <property type="nucleotide sequence ID" value="XM_046928720.1"/>
</dbReference>
<dbReference type="RefSeq" id="XP_046784677.1">
    <property type="nucleotide sequence ID" value="XM_046928721.1"/>
</dbReference>
<dbReference type="SMR" id="Q9W6S3"/>
<dbReference type="FunCoup" id="Q9W6S3">
    <property type="interactions" value="2617"/>
</dbReference>
<dbReference type="STRING" id="9031.ENSGALP00000066582"/>
<dbReference type="PaxDb" id="9031-ENSGALP00000001441"/>
<dbReference type="Ensembl" id="ENSGALT00010066433.1">
    <property type="protein sequence ID" value="ENSGALP00010040699.1"/>
    <property type="gene ID" value="ENSGALG00010027399.1"/>
</dbReference>
<dbReference type="GeneID" id="395627"/>
<dbReference type="KEGG" id="gga:395627"/>
<dbReference type="CTD" id="79109"/>
<dbReference type="VEuPathDB" id="HostDB:geneid_395627"/>
<dbReference type="eggNOG" id="KOG3739">
    <property type="taxonomic scope" value="Eukaryota"/>
</dbReference>
<dbReference type="GeneTree" id="ENSGT00390000000642"/>
<dbReference type="HOGENOM" id="CLU_514767_0_0_1"/>
<dbReference type="InParanoid" id="Q9W6S3"/>
<dbReference type="OMA" id="NAKFWPQ"/>
<dbReference type="OrthoDB" id="241990at2759"/>
<dbReference type="PhylomeDB" id="Q9W6S3"/>
<dbReference type="TreeFam" id="TF315174"/>
<dbReference type="Reactome" id="R-GGA-1257604">
    <property type="pathway name" value="PIP3 activates AKT signaling"/>
</dbReference>
<dbReference type="Reactome" id="R-GGA-389357">
    <property type="pathway name" value="CD28 dependent PI3K/Akt signaling"/>
</dbReference>
<dbReference type="Reactome" id="R-GGA-5218920">
    <property type="pathway name" value="VEGFR2 mediated vascular permeability"/>
</dbReference>
<dbReference type="Reactome" id="R-GGA-6804757">
    <property type="pathway name" value="Regulation of TP53 Degradation"/>
</dbReference>
<dbReference type="Reactome" id="R-GGA-9856530">
    <property type="pathway name" value="High laminar flow shear stress activates signaling by PIEZO1 and PECAM1:CDH5:KDR in endothelial cells"/>
</dbReference>
<dbReference type="PRO" id="PR:Q9W6S3"/>
<dbReference type="Proteomes" id="UP000000539">
    <property type="component" value="Chromosome 17"/>
</dbReference>
<dbReference type="Bgee" id="ENSGALG00000000977">
    <property type="expression patterns" value="Expressed in skeletal muscle tissue and 12 other cell types or tissues"/>
</dbReference>
<dbReference type="GO" id="GO:0005929">
    <property type="term" value="C:cilium"/>
    <property type="evidence" value="ECO:0007669"/>
    <property type="project" value="Ensembl"/>
</dbReference>
<dbReference type="GO" id="GO:0005737">
    <property type="term" value="C:cytoplasm"/>
    <property type="evidence" value="ECO:0000318"/>
    <property type="project" value="GO_Central"/>
</dbReference>
<dbReference type="GO" id="GO:0005829">
    <property type="term" value="C:cytosol"/>
    <property type="evidence" value="ECO:0007669"/>
    <property type="project" value="Ensembl"/>
</dbReference>
<dbReference type="GO" id="GO:0005769">
    <property type="term" value="C:early endosome"/>
    <property type="evidence" value="ECO:0000250"/>
    <property type="project" value="UniProtKB"/>
</dbReference>
<dbReference type="GO" id="GO:0031901">
    <property type="term" value="C:early endosome membrane"/>
    <property type="evidence" value="ECO:0007669"/>
    <property type="project" value="UniProtKB-SubCell"/>
</dbReference>
<dbReference type="GO" id="GO:0005783">
    <property type="term" value="C:endoplasmic reticulum"/>
    <property type="evidence" value="ECO:0000250"/>
    <property type="project" value="UniProtKB"/>
</dbReference>
<dbReference type="GO" id="GO:0005789">
    <property type="term" value="C:endoplasmic reticulum membrane"/>
    <property type="evidence" value="ECO:0007669"/>
    <property type="project" value="UniProtKB-SubCell"/>
</dbReference>
<dbReference type="GO" id="GO:0000139">
    <property type="term" value="C:Golgi membrane"/>
    <property type="evidence" value="ECO:0007669"/>
    <property type="project" value="UniProtKB-SubCell"/>
</dbReference>
<dbReference type="GO" id="GO:0005770">
    <property type="term" value="C:late endosome"/>
    <property type="evidence" value="ECO:0000250"/>
    <property type="project" value="UniProtKB"/>
</dbReference>
<dbReference type="GO" id="GO:0031902">
    <property type="term" value="C:late endosome membrane"/>
    <property type="evidence" value="ECO:0007669"/>
    <property type="project" value="UniProtKB-SubCell"/>
</dbReference>
<dbReference type="GO" id="GO:0005765">
    <property type="term" value="C:lysosomal membrane"/>
    <property type="evidence" value="ECO:0007669"/>
    <property type="project" value="UniProtKB-SubCell"/>
</dbReference>
<dbReference type="GO" id="GO:0005764">
    <property type="term" value="C:lysosome"/>
    <property type="evidence" value="ECO:0000250"/>
    <property type="project" value="UniProtKB"/>
</dbReference>
<dbReference type="GO" id="GO:0005741">
    <property type="term" value="C:mitochondrial outer membrane"/>
    <property type="evidence" value="ECO:0000250"/>
    <property type="project" value="UniProtKB"/>
</dbReference>
<dbReference type="GO" id="GO:0005654">
    <property type="term" value="C:nucleoplasm"/>
    <property type="evidence" value="ECO:0007669"/>
    <property type="project" value="Ensembl"/>
</dbReference>
<dbReference type="GO" id="GO:0048471">
    <property type="term" value="C:perinuclear region of cytoplasm"/>
    <property type="evidence" value="ECO:0007669"/>
    <property type="project" value="UniProtKB-SubCell"/>
</dbReference>
<dbReference type="GO" id="GO:0005886">
    <property type="term" value="C:plasma membrane"/>
    <property type="evidence" value="ECO:0000318"/>
    <property type="project" value="GO_Central"/>
</dbReference>
<dbReference type="GO" id="GO:1902554">
    <property type="term" value="C:serine/threonine protein kinase complex"/>
    <property type="evidence" value="ECO:0007669"/>
    <property type="project" value="Ensembl"/>
</dbReference>
<dbReference type="GO" id="GO:0031932">
    <property type="term" value="C:TORC2 complex"/>
    <property type="evidence" value="ECO:0000250"/>
    <property type="project" value="UniProtKB"/>
</dbReference>
<dbReference type="GO" id="GO:0140767">
    <property type="term" value="F:enzyme-substrate adaptor activity"/>
    <property type="evidence" value="ECO:0000250"/>
    <property type="project" value="UniProtKB"/>
</dbReference>
<dbReference type="GO" id="GO:0070300">
    <property type="term" value="F:phosphatidic acid binding"/>
    <property type="evidence" value="ECO:0007669"/>
    <property type="project" value="Ensembl"/>
</dbReference>
<dbReference type="GO" id="GO:0005547">
    <property type="term" value="F:phosphatidylinositol-3,4,5-trisphosphate binding"/>
    <property type="evidence" value="ECO:0000250"/>
    <property type="project" value="UniProtKB"/>
</dbReference>
<dbReference type="GO" id="GO:0043325">
    <property type="term" value="F:phosphatidylinositol-3,4-bisphosphate binding"/>
    <property type="evidence" value="ECO:0007669"/>
    <property type="project" value="Ensembl"/>
</dbReference>
<dbReference type="GO" id="GO:0080025">
    <property type="term" value="F:phosphatidylinositol-3,5-bisphosphate binding"/>
    <property type="evidence" value="ECO:0007669"/>
    <property type="project" value="Ensembl"/>
</dbReference>
<dbReference type="GO" id="GO:0005546">
    <property type="term" value="F:phosphatidylinositol-4,5-bisphosphate binding"/>
    <property type="evidence" value="ECO:0000318"/>
    <property type="project" value="GO_Central"/>
</dbReference>
<dbReference type="GO" id="GO:0019901">
    <property type="term" value="F:protein kinase binding"/>
    <property type="evidence" value="ECO:0007669"/>
    <property type="project" value="Ensembl"/>
</dbReference>
<dbReference type="GO" id="GO:0031267">
    <property type="term" value="F:small GTPase binding"/>
    <property type="evidence" value="ECO:0007669"/>
    <property type="project" value="Ensembl"/>
</dbReference>
<dbReference type="GO" id="GO:0032869">
    <property type="term" value="P:cellular response to insulin stimulus"/>
    <property type="evidence" value="ECO:0007669"/>
    <property type="project" value="Ensembl"/>
</dbReference>
<dbReference type="GO" id="GO:0046580">
    <property type="term" value="P:negative regulation of Ras protein signal transduction"/>
    <property type="evidence" value="ECO:0007669"/>
    <property type="project" value="Ensembl"/>
</dbReference>
<dbReference type="GO" id="GO:1900407">
    <property type="term" value="P:regulation of cellular response to oxidative stress"/>
    <property type="evidence" value="ECO:0007669"/>
    <property type="project" value="Ensembl"/>
</dbReference>
<dbReference type="GO" id="GO:0038203">
    <property type="term" value="P:TORC2 signaling"/>
    <property type="evidence" value="ECO:0000250"/>
    <property type="project" value="UniProtKB"/>
</dbReference>
<dbReference type="CDD" id="cd13331">
    <property type="entry name" value="PH_Avo1"/>
    <property type="match status" value="1"/>
</dbReference>
<dbReference type="FunFam" id="2.30.29.30:FF:000585">
    <property type="entry name" value="target of rapamycin complex 2 subunit MAPKAP1 isoform X3"/>
    <property type="match status" value="1"/>
</dbReference>
<dbReference type="Gene3D" id="2.30.29.30">
    <property type="entry name" value="Pleckstrin-homology domain (PH domain)/Phosphotyrosine-binding domain (PTB)"/>
    <property type="match status" value="1"/>
</dbReference>
<dbReference type="InterPro" id="IPR031567">
    <property type="entry name" value="CRIM_dom"/>
</dbReference>
<dbReference type="InterPro" id="IPR011993">
    <property type="entry name" value="PH-like_dom_sf"/>
</dbReference>
<dbReference type="InterPro" id="IPR008828">
    <property type="entry name" value="Sin1/Avo1"/>
</dbReference>
<dbReference type="InterPro" id="IPR032679">
    <property type="entry name" value="Sin1_N"/>
</dbReference>
<dbReference type="InterPro" id="IPR031313">
    <property type="entry name" value="Sin1_PH_dom"/>
</dbReference>
<dbReference type="PANTHER" id="PTHR13335">
    <property type="entry name" value="TARGET OF RAPAMYCIN COMPLEX 2 SUBUNIT MAPKAP1"/>
    <property type="match status" value="1"/>
</dbReference>
<dbReference type="PANTHER" id="PTHR13335:SF1">
    <property type="entry name" value="TARGET OF RAPAMYCIN COMPLEX 2 SUBUNIT MAPKAP1"/>
    <property type="match status" value="1"/>
</dbReference>
<dbReference type="Pfam" id="PF16978">
    <property type="entry name" value="CRIM"/>
    <property type="match status" value="1"/>
</dbReference>
<dbReference type="Pfam" id="PF25322">
    <property type="entry name" value="RBD_SIN1"/>
    <property type="match status" value="1"/>
</dbReference>
<dbReference type="Pfam" id="PF05422">
    <property type="entry name" value="SIN1"/>
    <property type="match status" value="1"/>
</dbReference>
<dbReference type="Pfam" id="PF16979">
    <property type="entry name" value="SIN1_PH"/>
    <property type="match status" value="1"/>
</dbReference>
<name>SIN1_CHICK</name>
<reference key="1">
    <citation type="journal article" date="1999" name="EMBO J.">
        <title>Sin1: an evolutionarily conserved component of the eukaryotic SAPK pathway.</title>
        <authorList>
            <person name="Wilkinson M.G."/>
            <person name="Soto Pino T."/>
            <person name="Tournier S."/>
            <person name="Buck V."/>
            <person name="Martin H."/>
            <person name="Christiansen J."/>
            <person name="Wilkinson D.G."/>
            <person name="Millar J.B.A."/>
        </authorList>
    </citation>
    <scope>NUCLEOTIDE SEQUENCE [MRNA]</scope>
</reference>
<organism>
    <name type="scientific">Gallus gallus</name>
    <name type="common">Chicken</name>
    <dbReference type="NCBI Taxonomy" id="9031"/>
    <lineage>
        <taxon>Eukaryota</taxon>
        <taxon>Metazoa</taxon>
        <taxon>Chordata</taxon>
        <taxon>Craniata</taxon>
        <taxon>Vertebrata</taxon>
        <taxon>Euteleostomi</taxon>
        <taxon>Archelosauria</taxon>
        <taxon>Archosauria</taxon>
        <taxon>Dinosauria</taxon>
        <taxon>Saurischia</taxon>
        <taxon>Theropoda</taxon>
        <taxon>Coelurosauria</taxon>
        <taxon>Aves</taxon>
        <taxon>Neognathae</taxon>
        <taxon>Galloanserae</taxon>
        <taxon>Galliformes</taxon>
        <taxon>Phasianidae</taxon>
        <taxon>Phasianinae</taxon>
        <taxon>Gallus</taxon>
    </lineage>
</organism>
<sequence length="522" mass="59221">MAFLDNPTIILAHIRQSHVTSDDTGMCEMVLIDHDVDLEKFNPSSTYGDSASETQGSNGETQGYVYSQSVDITSSWDFGIRRRSNTAQRLERLRKERQNQIKCKNVQWKDRNTSYSAEELSSLFEKKNFRVRSPCSGKQSILSVRLEQCPLQLNNPFNEYSKFDGKGHVGTTATKKIDVYLPLHANQDKLQPMTVVTIANAKVHDLIGLICWQYTSEGREPKLNDNVSAYCLHIAEDDGEVDTDFPPLDSNEPIHKFGFSTLALVEKYSSPGLAAKQSLFVRINAAHGFSLIQVDSMKVTMKDILQKALKRRKGSQRGSGPQYRLEKQSEPNVPVDLDCTLESQSTLEFCLVRENSSRGEEISEEDPQIDIATVQDMLSSHHYKSFKVSMIHRLRFTTDVQLGISGDKVEIDPVTNQKASTKFWIKQKPISIDSELLCACDLVEEKSPSHAIFKLTYLSNHDYKHLYFESDAATVNEIVLKVNYILESRASTARAEYFAQKQRKLNRRTSFSFQKEKKSGQQ</sequence>
<keyword id="KW-1003">Cell membrane</keyword>
<keyword id="KW-0963">Cytoplasm</keyword>
<keyword id="KW-0256">Endoplasmic reticulum</keyword>
<keyword id="KW-0967">Endosome</keyword>
<keyword id="KW-0333">Golgi apparatus</keyword>
<keyword id="KW-0458">Lysosome</keyword>
<keyword id="KW-0472">Membrane</keyword>
<keyword id="KW-0496">Mitochondrion</keyword>
<keyword id="KW-1000">Mitochondrion outer membrane</keyword>
<keyword id="KW-0539">Nucleus</keyword>
<keyword id="KW-1185">Reference proteome</keyword>
<feature type="chain" id="PRO_0000218769" description="Target of rapamycin complex 2 subunit MAPKAP1">
    <location>
        <begin position="1"/>
        <end position="522"/>
    </location>
</feature>
<feature type="domain" description="CRIM" evidence="3">
    <location>
        <begin position="139"/>
        <end position="267"/>
    </location>
</feature>
<feature type="domain" description="SIN1-type PH" evidence="3">
    <location>
        <begin position="382"/>
        <end position="487"/>
    </location>
</feature>
<feature type="region of interest" description="Disordered" evidence="4">
    <location>
        <begin position="43"/>
        <end position="62"/>
    </location>
</feature>
<feature type="region of interest" description="SIN1-type RBD" evidence="3">
    <location>
        <begin position="279"/>
        <end position="353"/>
    </location>
</feature>
<feature type="region of interest" description="Disordered" evidence="4">
    <location>
        <begin position="310"/>
        <end position="330"/>
    </location>
</feature>
<feature type="binding site" evidence="2">
    <location>
        <position position="393"/>
    </location>
    <ligand>
        <name>a 1,2-diacyl-sn-glycero-3-phospho-(1D-myo-inositol-3,4,5-trisphosphate)</name>
        <dbReference type="ChEBI" id="CHEBI:57836"/>
    </ligand>
</feature>
<feature type="binding site" evidence="2">
    <location>
        <position position="428"/>
    </location>
    <ligand>
        <name>a 1,2-diacyl-sn-glycero-3-phospho-(1D-myo-inositol-3,4,5-trisphosphate)</name>
        <dbReference type="ChEBI" id="CHEBI:57836"/>
    </ligand>
</feature>
<feature type="binding site" evidence="2">
    <location>
        <position position="464"/>
    </location>
    <ligand>
        <name>a 1,2-diacyl-sn-glycero-3-phospho-(1D-myo-inositol-3,4,5-trisphosphate)</name>
        <dbReference type="ChEBI" id="CHEBI:57836"/>
    </ligand>
</feature>
<evidence type="ECO:0000250" key="1">
    <source>
        <dbReference type="UniProtKB" id="Q8BKH7"/>
    </source>
</evidence>
<evidence type="ECO:0000250" key="2">
    <source>
        <dbReference type="UniProtKB" id="Q9BPZ7"/>
    </source>
</evidence>
<evidence type="ECO:0000255" key="3"/>
<evidence type="ECO:0000256" key="4">
    <source>
        <dbReference type="SAM" id="MobiDB-lite"/>
    </source>
</evidence>
<evidence type="ECO:0000305" key="5"/>
<gene>
    <name type="primary">MAPKAP1</name>
    <name type="synonym">SIN1</name>
</gene>
<comment type="function">
    <text evidence="2">Component of the mechanistic target of rapamycin complex 2 (mTORC2), which transduces signals from growth factors to pathways involved in proliferation, cytoskeletal organization, lipogenesis and anabolic output. In response to growth factors, mTORC2 phosphorylates and activates AGC protein kinase family members, including AKT (AKT1, AKT2 and AKT3), PKC (PRKCA, PRKCB and PRKCE) and SGK1. In contrast to mTORC1, mTORC2 is nutrient-insensitive. Within the mTORC2 complex, MAPKAP1/SIN1 acts as a substrate adapter which recognizes and binds AGC protein kinase family members for phosphorylation by MTOR.</text>
</comment>
<comment type="activity regulation">
    <text evidence="2">Phosphatidylinositol 3,4,5-trisphosphate (PI(3,4,5)P3) promotes MTOR activation by relieving MAPKAP1/SIN1-mediated inhibition of MTOR that takes place in absence of PI(3,4,5)P3.</text>
</comment>
<comment type="subunit">
    <text evidence="2">Component of the mechanistic target of rapamycin complex 2 (mTORC2), consisting in two heterotretramers composed of MTOR, MLST8, RICTOR and MAPKAP1/SIN1. Contrary to mTORC1, mTORC2 does not bind to and is not sensitive to FKBP12-rapamycin.</text>
</comment>
<comment type="subcellular location">
    <subcellularLocation>
        <location evidence="2">Cell membrane</location>
        <topology evidence="2">Peripheral membrane protein</topology>
    </subcellularLocation>
    <subcellularLocation>
        <location evidence="2">Endoplasmic reticulum membrane</location>
        <topology evidence="2">Peripheral membrane protein</topology>
    </subcellularLocation>
    <subcellularLocation>
        <location evidence="2">Early endosome membrane</location>
        <topology evidence="2">Peripheral membrane protein</topology>
    </subcellularLocation>
    <subcellularLocation>
        <location evidence="2">Late endosome membrane</location>
        <topology evidence="2">Peripheral membrane protein</topology>
    </subcellularLocation>
    <subcellularLocation>
        <location evidence="2">Lysosome membrane</location>
        <topology evidence="2">Peripheral membrane protein</topology>
    </subcellularLocation>
    <subcellularLocation>
        <location evidence="2">Golgi apparatus membrane</location>
        <topology evidence="2">Peripheral membrane protein</topology>
    </subcellularLocation>
    <subcellularLocation>
        <location evidence="2">Mitochondrion outer membrane</location>
        <topology evidence="2">Peripheral membrane protein</topology>
    </subcellularLocation>
    <subcellularLocation>
        <location evidence="1">Cytoplasm</location>
        <location evidence="1">Perinuclear region</location>
    </subcellularLocation>
    <subcellularLocation>
        <location evidence="2">Nucleus</location>
    </subcellularLocation>
    <text evidence="2">The mTORC2 complex localizes to membranes: mTORC2 is active at the plasma membrane, endoplasmic reticulum membrane, lysosomes and perinuclear region.</text>
</comment>
<comment type="domain">
    <text evidence="2">The CRIM domain forms a ubiquitin-like fold with a characteristic acidic loop, which recognizes and binds AGC protein kinase family members substrates.</text>
</comment>
<comment type="domain">
    <text evidence="2">The SIN1-type PH binds phosphatidylinositol 3,4,5-trisphosphate (PI(3,4,5)P3). It plays a dual role in mTORC2: in absence of PI(3,4,5)P3, it binds and inactivates MTOR. PI(3,4,5)P3-binding relieves the inhibition, leading to mTORC2 activation.</text>
</comment>
<comment type="similarity">
    <text evidence="5">Belongs to the SIN1 family.</text>
</comment>
<protein>
    <recommendedName>
        <fullName>Target of rapamycin complex 2 subunit MAPKAP1</fullName>
        <shortName>TORC2 subunit MAPKAP1</shortName>
    </recommendedName>
    <alternativeName>
        <fullName>Mitogen-activated protein kinase 2-associated protein 1</fullName>
    </alternativeName>
    <alternativeName>
        <fullName>Stress-activated map kinase-interacting protein 1</fullName>
        <shortName>SAPK-interacting protein 1</shortName>
    </alternativeName>
</protein>
<accession>Q9W6S3</accession>